<sequence length="209" mass="22895">MSQEATEAPAMPGEGHGHNKAKARWLLGTDRKRSRINRTRQDLWEDTSWSNHRLSRATSAPRGTRARGTAHGRSEASPENAARERTRVKTLRQAFLALQAALPAVPPDTKLSKLDVLVLATSYIAHLTRTLGHELPGPAWPPFVRGLRYLHPLKKWPMRSRLYAGGLGCSDLDSTTAITTGQRCKDAELGSQDSVAAESLLTSPAFGNK</sequence>
<feature type="chain" id="PRO_0000315821" description="Transcription factor 23">
    <location>
        <begin position="1"/>
        <end position="209"/>
    </location>
</feature>
<feature type="domain" description="bHLH" evidence="1">
    <location>
        <begin position="75"/>
        <end position="127"/>
    </location>
</feature>
<feature type="region of interest" description="Disordered" evidence="2">
    <location>
        <begin position="1"/>
        <end position="20"/>
    </location>
</feature>
<feature type="region of interest" description="Disordered" evidence="2">
    <location>
        <begin position="54"/>
        <end position="85"/>
    </location>
</feature>
<feature type="compositionally biased region" description="Basic and acidic residues" evidence="2">
    <location>
        <begin position="72"/>
        <end position="85"/>
    </location>
</feature>
<accession>Q9JLR5</accession>
<proteinExistence type="evidence at protein level"/>
<gene>
    <name type="primary">Tcf23</name>
    <name type="synonym">Out</name>
</gene>
<protein>
    <recommendedName>
        <fullName>Transcription factor 23</fullName>
        <shortName>TCF-23</shortName>
    </recommendedName>
    <alternativeName>
        <fullName>Basic helix-loop-helix transcription factor OUT</fullName>
    </alternativeName>
    <alternativeName>
        <fullName>Ovary, uterus and testis protein</fullName>
    </alternativeName>
</protein>
<name>TCF23_MOUSE</name>
<keyword id="KW-0217">Developmental protein</keyword>
<keyword id="KW-0221">Differentiation</keyword>
<keyword id="KW-0517">Myogenesis</keyword>
<keyword id="KW-0539">Nucleus</keyword>
<keyword id="KW-1185">Reference proteome</keyword>
<evidence type="ECO:0000255" key="1">
    <source>
        <dbReference type="PROSITE-ProRule" id="PRU00981"/>
    </source>
</evidence>
<evidence type="ECO:0000256" key="2">
    <source>
        <dbReference type="SAM" id="MobiDB-lite"/>
    </source>
</evidence>
<evidence type="ECO:0000269" key="3">
    <source>
    </source>
</evidence>
<organism>
    <name type="scientific">Mus musculus</name>
    <name type="common">Mouse</name>
    <dbReference type="NCBI Taxonomy" id="10090"/>
    <lineage>
        <taxon>Eukaryota</taxon>
        <taxon>Metazoa</taxon>
        <taxon>Chordata</taxon>
        <taxon>Craniata</taxon>
        <taxon>Vertebrata</taxon>
        <taxon>Euteleostomi</taxon>
        <taxon>Mammalia</taxon>
        <taxon>Eutheria</taxon>
        <taxon>Euarchontoglires</taxon>
        <taxon>Glires</taxon>
        <taxon>Rodentia</taxon>
        <taxon>Myomorpha</taxon>
        <taxon>Muroidea</taxon>
        <taxon>Muridae</taxon>
        <taxon>Murinae</taxon>
        <taxon>Mus</taxon>
        <taxon>Mus</taxon>
    </lineage>
</organism>
<dbReference type="EMBL" id="AB059397">
    <property type="protein sequence ID" value="BAB69473.1"/>
    <property type="molecule type" value="Genomic_DNA"/>
</dbReference>
<dbReference type="EMBL" id="AF142405">
    <property type="protein sequence ID" value="AAF31168.1"/>
    <property type="molecule type" value="mRNA"/>
</dbReference>
<dbReference type="EMBL" id="AK030277">
    <property type="protein sequence ID" value="BAC26873.1"/>
    <property type="molecule type" value="mRNA"/>
</dbReference>
<dbReference type="EMBL" id="AK030297">
    <property type="protein sequence ID" value="BAC26885.1"/>
    <property type="molecule type" value="mRNA"/>
</dbReference>
<dbReference type="EMBL" id="BC119346">
    <property type="protein sequence ID" value="AAI19347.1"/>
    <property type="molecule type" value="mRNA"/>
</dbReference>
<dbReference type="EMBL" id="BC120609">
    <property type="protein sequence ID" value="AAI20610.1"/>
    <property type="molecule type" value="mRNA"/>
</dbReference>
<dbReference type="CCDS" id="CCDS19168.1"/>
<dbReference type="RefSeq" id="NP_444315.1">
    <property type="nucleotide sequence ID" value="NM_053085.2"/>
</dbReference>
<dbReference type="SMR" id="Q9JLR5"/>
<dbReference type="BioGRID" id="213716">
    <property type="interactions" value="1"/>
</dbReference>
<dbReference type="FunCoup" id="Q9JLR5">
    <property type="interactions" value="91"/>
</dbReference>
<dbReference type="STRING" id="10090.ENSMUSP00000006818"/>
<dbReference type="GlyGen" id="Q9JLR5">
    <property type="glycosylation" value="1 site"/>
</dbReference>
<dbReference type="iPTMnet" id="Q9JLR5"/>
<dbReference type="PhosphoSitePlus" id="Q9JLR5"/>
<dbReference type="PaxDb" id="10090-ENSMUSP00000006818"/>
<dbReference type="ProteomicsDB" id="263148"/>
<dbReference type="Antibodypedia" id="47343">
    <property type="antibodies" value="25 antibodies from 11 providers"/>
</dbReference>
<dbReference type="DNASU" id="69852"/>
<dbReference type="Ensembl" id="ENSMUST00000006818.4">
    <property type="protein sequence ID" value="ENSMUSP00000006818.3"/>
    <property type="gene ID" value="ENSMUSG00000006642.4"/>
</dbReference>
<dbReference type="GeneID" id="69852"/>
<dbReference type="KEGG" id="mmu:69852"/>
<dbReference type="UCSC" id="uc008wws.1">
    <property type="organism name" value="mouse"/>
</dbReference>
<dbReference type="AGR" id="MGI:1934960"/>
<dbReference type="CTD" id="150921"/>
<dbReference type="MGI" id="MGI:1934960">
    <property type="gene designation" value="Tcf23"/>
</dbReference>
<dbReference type="VEuPathDB" id="HostDB:ENSMUSG00000006642"/>
<dbReference type="eggNOG" id="KOG4029">
    <property type="taxonomic scope" value="Eukaryota"/>
</dbReference>
<dbReference type="GeneTree" id="ENSGT00940000161395"/>
<dbReference type="HOGENOM" id="CLU_101416_1_0_1"/>
<dbReference type="InParanoid" id="Q9JLR5"/>
<dbReference type="OMA" id="RTRQDLW"/>
<dbReference type="OrthoDB" id="10063436at2759"/>
<dbReference type="PhylomeDB" id="Q9JLR5"/>
<dbReference type="TreeFam" id="TF350742"/>
<dbReference type="BioGRID-ORCS" id="69852">
    <property type="hits" value="5 hits in 77 CRISPR screens"/>
</dbReference>
<dbReference type="PRO" id="PR:Q9JLR5"/>
<dbReference type="Proteomes" id="UP000000589">
    <property type="component" value="Chromosome 5"/>
</dbReference>
<dbReference type="RNAct" id="Q9JLR5">
    <property type="molecule type" value="protein"/>
</dbReference>
<dbReference type="Bgee" id="ENSMUSG00000006642">
    <property type="expression patterns" value="Expressed in pyloric antrum and 67 other cell types or tissues"/>
</dbReference>
<dbReference type="GO" id="GO:0000791">
    <property type="term" value="C:euchromatin"/>
    <property type="evidence" value="ECO:0000314"/>
    <property type="project" value="ARUK-UCL"/>
</dbReference>
<dbReference type="GO" id="GO:0005634">
    <property type="term" value="C:nucleus"/>
    <property type="evidence" value="ECO:0007669"/>
    <property type="project" value="UniProtKB-SubCell"/>
</dbReference>
<dbReference type="GO" id="GO:0046983">
    <property type="term" value="F:protein dimerization activity"/>
    <property type="evidence" value="ECO:0007669"/>
    <property type="project" value="InterPro"/>
</dbReference>
<dbReference type="GO" id="GO:0061629">
    <property type="term" value="F:RNA polymerase II-specific DNA-binding transcription factor binding"/>
    <property type="evidence" value="ECO:0000353"/>
    <property type="project" value="ARUK-UCL"/>
</dbReference>
<dbReference type="GO" id="GO:0140416">
    <property type="term" value="F:transcription regulator inhibitor activity"/>
    <property type="evidence" value="ECO:0000314"/>
    <property type="project" value="ARUK-UCL"/>
</dbReference>
<dbReference type="GO" id="GO:0030154">
    <property type="term" value="P:cell differentiation"/>
    <property type="evidence" value="ECO:0007669"/>
    <property type="project" value="UniProtKB-KW"/>
</dbReference>
<dbReference type="GO" id="GO:0046697">
    <property type="term" value="P:decidualization"/>
    <property type="evidence" value="ECO:0000266"/>
    <property type="project" value="MGI"/>
</dbReference>
<dbReference type="GO" id="GO:0007517">
    <property type="term" value="P:muscle organ development"/>
    <property type="evidence" value="ECO:0007669"/>
    <property type="project" value="UniProtKB-KW"/>
</dbReference>
<dbReference type="GO" id="GO:0051148">
    <property type="term" value="P:negative regulation of muscle cell differentiation"/>
    <property type="evidence" value="ECO:0000314"/>
    <property type="project" value="ARUK-UCL"/>
</dbReference>
<dbReference type="GO" id="GO:0000122">
    <property type="term" value="P:negative regulation of transcription by RNA polymerase II"/>
    <property type="evidence" value="ECO:0000314"/>
    <property type="project" value="ARUK-UCL"/>
</dbReference>
<dbReference type="GO" id="GO:0010628">
    <property type="term" value="P:positive regulation of gene expression"/>
    <property type="evidence" value="ECO:0000266"/>
    <property type="project" value="MGI"/>
</dbReference>
<dbReference type="CDD" id="cd19709">
    <property type="entry name" value="bHLH_TS_TCF23_OUT"/>
    <property type="match status" value="1"/>
</dbReference>
<dbReference type="Gene3D" id="4.10.280.10">
    <property type="entry name" value="Helix-loop-helix DNA-binding domain"/>
    <property type="match status" value="1"/>
</dbReference>
<dbReference type="InterPro" id="IPR011598">
    <property type="entry name" value="bHLH_dom"/>
</dbReference>
<dbReference type="InterPro" id="IPR050283">
    <property type="entry name" value="E-box_TF_Regulators"/>
</dbReference>
<dbReference type="InterPro" id="IPR036638">
    <property type="entry name" value="HLH_DNA-bd_sf"/>
</dbReference>
<dbReference type="PANTHER" id="PTHR23349">
    <property type="entry name" value="BASIC HELIX-LOOP-HELIX TRANSCRIPTION FACTOR, TWIST"/>
    <property type="match status" value="1"/>
</dbReference>
<dbReference type="PANTHER" id="PTHR23349:SF58">
    <property type="entry name" value="TRANSCRIPTION FACTOR 23"/>
    <property type="match status" value="1"/>
</dbReference>
<dbReference type="Pfam" id="PF00010">
    <property type="entry name" value="HLH"/>
    <property type="match status" value="1"/>
</dbReference>
<dbReference type="SMART" id="SM00353">
    <property type="entry name" value="HLH"/>
    <property type="match status" value="1"/>
</dbReference>
<dbReference type="SUPFAM" id="SSF47459">
    <property type="entry name" value="HLH, helix-loop-helix DNA-binding domain"/>
    <property type="match status" value="1"/>
</dbReference>
<dbReference type="PROSITE" id="PS50888">
    <property type="entry name" value="BHLH"/>
    <property type="match status" value="1"/>
</dbReference>
<comment type="function">
    <text evidence="3">Inhibits E-box-mediated binding and transactivation of bHLH factors. Inhibitory effect is similar to that of ID proteins. Inhibits the formation of TCF3 and MYOD1 homodimers and heterodimers. Lacks DNA binding activity. May be involved in the regulation or modulation of smooth muscle contraction of the uterus during pregnancy and particularly around the time of delivery. Seems to play a role in the inhibition of myogenesis.</text>
</comment>
<comment type="subunit">
    <text evidence="3">Forms inactive heterodimeric complex with TCF3.</text>
</comment>
<comment type="subcellular location">
    <subcellularLocation>
        <location evidence="1 3">Nucleus</location>
    </subcellularLocation>
</comment>
<comment type="tissue specificity">
    <text evidence="3">Highly expressed in the uterus (predominantly in myometrium), ovary, and testis. Expression in the uterus is higher in the diestrus phase than in the estrus phase and reaches a maximum at 7.5 dpc. Expression declines towards the time of delivery and returns to the non-pregnant level 4 days after delivery. Low expression seen in lung, heart, intestine, and spleen.</text>
</comment>
<comment type="domain">
    <text>Both the bHLH region and the C-terminal portion are essential for inhibitory function.</text>
</comment>
<reference key="1">
    <citation type="journal article" date="2000" name="J. Biol. Chem.">
        <title>OUT, a novel basic helix-loop-helix transcription factor with an Id-like inhibitory activity.</title>
        <authorList>
            <person name="Narumi O."/>
            <person name="Mori S."/>
            <person name="Boku S."/>
            <person name="Tsuji Y."/>
            <person name="Hashimoto N."/>
            <person name="Nishikawa S."/>
            <person name="Yokota Y."/>
        </authorList>
    </citation>
    <scope>NUCLEOTIDE SEQUENCE [GENOMIC DNA / MRNA]</scope>
    <scope>FUNCTION</scope>
    <scope>SUBUNIT</scope>
    <scope>SUBCELLULAR LOCATION</scope>
    <scope>TISSUE SPECIFICITY</scope>
    <source>
        <strain>ICR</strain>
        <tissue>Ovary</tissue>
    </source>
</reference>
<reference key="2">
    <citation type="journal article" date="2005" name="Science">
        <title>The transcriptional landscape of the mammalian genome.</title>
        <authorList>
            <person name="Carninci P."/>
            <person name="Kasukawa T."/>
            <person name="Katayama S."/>
            <person name="Gough J."/>
            <person name="Frith M.C."/>
            <person name="Maeda N."/>
            <person name="Oyama R."/>
            <person name="Ravasi T."/>
            <person name="Lenhard B."/>
            <person name="Wells C."/>
            <person name="Kodzius R."/>
            <person name="Shimokawa K."/>
            <person name="Bajic V.B."/>
            <person name="Brenner S.E."/>
            <person name="Batalov S."/>
            <person name="Forrest A.R."/>
            <person name="Zavolan M."/>
            <person name="Davis M.J."/>
            <person name="Wilming L.G."/>
            <person name="Aidinis V."/>
            <person name="Allen J.E."/>
            <person name="Ambesi-Impiombato A."/>
            <person name="Apweiler R."/>
            <person name="Aturaliya R.N."/>
            <person name="Bailey T.L."/>
            <person name="Bansal M."/>
            <person name="Baxter L."/>
            <person name="Beisel K.W."/>
            <person name="Bersano T."/>
            <person name="Bono H."/>
            <person name="Chalk A.M."/>
            <person name="Chiu K.P."/>
            <person name="Choudhary V."/>
            <person name="Christoffels A."/>
            <person name="Clutterbuck D.R."/>
            <person name="Crowe M.L."/>
            <person name="Dalla E."/>
            <person name="Dalrymple B.P."/>
            <person name="de Bono B."/>
            <person name="Della Gatta G."/>
            <person name="di Bernardo D."/>
            <person name="Down T."/>
            <person name="Engstrom P."/>
            <person name="Fagiolini M."/>
            <person name="Faulkner G."/>
            <person name="Fletcher C.F."/>
            <person name="Fukushima T."/>
            <person name="Furuno M."/>
            <person name="Futaki S."/>
            <person name="Gariboldi M."/>
            <person name="Georgii-Hemming P."/>
            <person name="Gingeras T.R."/>
            <person name="Gojobori T."/>
            <person name="Green R.E."/>
            <person name="Gustincich S."/>
            <person name="Harbers M."/>
            <person name="Hayashi Y."/>
            <person name="Hensch T.K."/>
            <person name="Hirokawa N."/>
            <person name="Hill D."/>
            <person name="Huminiecki L."/>
            <person name="Iacono M."/>
            <person name="Ikeo K."/>
            <person name="Iwama A."/>
            <person name="Ishikawa T."/>
            <person name="Jakt M."/>
            <person name="Kanapin A."/>
            <person name="Katoh M."/>
            <person name="Kawasawa Y."/>
            <person name="Kelso J."/>
            <person name="Kitamura H."/>
            <person name="Kitano H."/>
            <person name="Kollias G."/>
            <person name="Krishnan S.P."/>
            <person name="Kruger A."/>
            <person name="Kummerfeld S.K."/>
            <person name="Kurochkin I.V."/>
            <person name="Lareau L.F."/>
            <person name="Lazarevic D."/>
            <person name="Lipovich L."/>
            <person name="Liu J."/>
            <person name="Liuni S."/>
            <person name="McWilliam S."/>
            <person name="Madan Babu M."/>
            <person name="Madera M."/>
            <person name="Marchionni L."/>
            <person name="Matsuda H."/>
            <person name="Matsuzawa S."/>
            <person name="Miki H."/>
            <person name="Mignone F."/>
            <person name="Miyake S."/>
            <person name="Morris K."/>
            <person name="Mottagui-Tabar S."/>
            <person name="Mulder N."/>
            <person name="Nakano N."/>
            <person name="Nakauchi H."/>
            <person name="Ng P."/>
            <person name="Nilsson R."/>
            <person name="Nishiguchi S."/>
            <person name="Nishikawa S."/>
            <person name="Nori F."/>
            <person name="Ohara O."/>
            <person name="Okazaki Y."/>
            <person name="Orlando V."/>
            <person name="Pang K.C."/>
            <person name="Pavan W.J."/>
            <person name="Pavesi G."/>
            <person name="Pesole G."/>
            <person name="Petrovsky N."/>
            <person name="Piazza S."/>
            <person name="Reed J."/>
            <person name="Reid J.F."/>
            <person name="Ring B.Z."/>
            <person name="Ringwald M."/>
            <person name="Rost B."/>
            <person name="Ruan Y."/>
            <person name="Salzberg S.L."/>
            <person name="Sandelin A."/>
            <person name="Schneider C."/>
            <person name="Schoenbach C."/>
            <person name="Sekiguchi K."/>
            <person name="Semple C.A."/>
            <person name="Seno S."/>
            <person name="Sessa L."/>
            <person name="Sheng Y."/>
            <person name="Shibata Y."/>
            <person name="Shimada H."/>
            <person name="Shimada K."/>
            <person name="Silva D."/>
            <person name="Sinclair B."/>
            <person name="Sperling S."/>
            <person name="Stupka E."/>
            <person name="Sugiura K."/>
            <person name="Sultana R."/>
            <person name="Takenaka Y."/>
            <person name="Taki K."/>
            <person name="Tammoja K."/>
            <person name="Tan S.L."/>
            <person name="Tang S."/>
            <person name="Taylor M.S."/>
            <person name="Tegner J."/>
            <person name="Teichmann S.A."/>
            <person name="Ueda H.R."/>
            <person name="van Nimwegen E."/>
            <person name="Verardo R."/>
            <person name="Wei C.L."/>
            <person name="Yagi K."/>
            <person name="Yamanishi H."/>
            <person name="Zabarovsky E."/>
            <person name="Zhu S."/>
            <person name="Zimmer A."/>
            <person name="Hide W."/>
            <person name="Bult C."/>
            <person name="Grimmond S.M."/>
            <person name="Teasdale R.D."/>
            <person name="Liu E.T."/>
            <person name="Brusic V."/>
            <person name="Quackenbush J."/>
            <person name="Wahlestedt C."/>
            <person name="Mattick J.S."/>
            <person name="Hume D.A."/>
            <person name="Kai C."/>
            <person name="Sasaki D."/>
            <person name="Tomaru Y."/>
            <person name="Fukuda S."/>
            <person name="Kanamori-Katayama M."/>
            <person name="Suzuki M."/>
            <person name="Aoki J."/>
            <person name="Arakawa T."/>
            <person name="Iida J."/>
            <person name="Imamura K."/>
            <person name="Itoh M."/>
            <person name="Kato T."/>
            <person name="Kawaji H."/>
            <person name="Kawagashira N."/>
            <person name="Kawashima T."/>
            <person name="Kojima M."/>
            <person name="Kondo S."/>
            <person name="Konno H."/>
            <person name="Nakano K."/>
            <person name="Ninomiya N."/>
            <person name="Nishio T."/>
            <person name="Okada M."/>
            <person name="Plessy C."/>
            <person name="Shibata K."/>
            <person name="Shiraki T."/>
            <person name="Suzuki S."/>
            <person name="Tagami M."/>
            <person name="Waki K."/>
            <person name="Watahiki A."/>
            <person name="Okamura-Oho Y."/>
            <person name="Suzuki H."/>
            <person name="Kawai J."/>
            <person name="Hayashizaki Y."/>
        </authorList>
    </citation>
    <scope>NUCLEOTIDE SEQUENCE [LARGE SCALE MRNA]</scope>
    <source>
        <strain>C57BL/6J</strain>
        <tissue>Ovary</tissue>
        <tissue>Uterus</tissue>
    </source>
</reference>
<reference key="3">
    <citation type="journal article" date="2004" name="Genome Res.">
        <title>The status, quality, and expansion of the NIH full-length cDNA project: the Mammalian Gene Collection (MGC).</title>
        <authorList>
            <consortium name="The MGC Project Team"/>
        </authorList>
    </citation>
    <scope>NUCLEOTIDE SEQUENCE [LARGE SCALE MRNA]</scope>
    <source>
        <tissue>Brain</tissue>
    </source>
</reference>